<gene>
    <name evidence="2" type="primary">psbH</name>
</gene>
<dbReference type="EMBL" id="EF115542">
    <property type="protein sequence ID" value="ABK79524.1"/>
    <property type="molecule type" value="Genomic_DNA"/>
</dbReference>
<dbReference type="RefSeq" id="XP_002457871.1">
    <property type="nucleotide sequence ID" value="XM_002457826.1"/>
</dbReference>
<dbReference type="RefSeq" id="YP_899436.1">
    <property type="nucleotide sequence ID" value="NC_008602.1"/>
</dbReference>
<dbReference type="SMR" id="A1E9V3"/>
<dbReference type="FunCoup" id="A1E9V3">
    <property type="interactions" value="448"/>
</dbReference>
<dbReference type="STRING" id="4558.A1E9V3"/>
<dbReference type="EnsemblPlants" id="EES02991">
    <property type="protein sequence ID" value="EES02991"/>
    <property type="gene ID" value="SORBI_3003G168800"/>
</dbReference>
<dbReference type="GeneID" id="4549220"/>
<dbReference type="Gramene" id="EES02991">
    <property type="protein sequence ID" value="EES02991"/>
    <property type="gene ID" value="SORBI_3003G168800"/>
</dbReference>
<dbReference type="KEGG" id="sbi:4549220"/>
<dbReference type="eggNOG" id="ENOG502S8Y7">
    <property type="taxonomic scope" value="Eukaryota"/>
</dbReference>
<dbReference type="HOGENOM" id="CLU_190203_1_0_1"/>
<dbReference type="InParanoid" id="A1E9V3"/>
<dbReference type="OMA" id="RTWLGDI"/>
<dbReference type="OrthoDB" id="564838at2759"/>
<dbReference type="Proteomes" id="UP000000768">
    <property type="component" value="Chloroplast"/>
</dbReference>
<dbReference type="ExpressionAtlas" id="A1E9V3">
    <property type="expression patterns" value="baseline"/>
</dbReference>
<dbReference type="GO" id="GO:0009535">
    <property type="term" value="C:chloroplast thylakoid membrane"/>
    <property type="evidence" value="ECO:0007669"/>
    <property type="project" value="UniProtKB-SubCell"/>
</dbReference>
<dbReference type="GO" id="GO:0009523">
    <property type="term" value="C:photosystem II"/>
    <property type="evidence" value="ECO:0007669"/>
    <property type="project" value="UniProtKB-KW"/>
</dbReference>
<dbReference type="GO" id="GO:0042301">
    <property type="term" value="F:phosphate ion binding"/>
    <property type="evidence" value="ECO:0007669"/>
    <property type="project" value="InterPro"/>
</dbReference>
<dbReference type="GO" id="GO:0015979">
    <property type="term" value="P:photosynthesis"/>
    <property type="evidence" value="ECO:0007669"/>
    <property type="project" value="UniProtKB-UniRule"/>
</dbReference>
<dbReference type="GO" id="GO:0050821">
    <property type="term" value="P:protein stabilization"/>
    <property type="evidence" value="ECO:0007669"/>
    <property type="project" value="InterPro"/>
</dbReference>
<dbReference type="FunFam" id="1.20.5.880:FF:000001">
    <property type="entry name" value="Photosystem II reaction center protein H"/>
    <property type="match status" value="1"/>
</dbReference>
<dbReference type="Gene3D" id="1.20.5.880">
    <property type="entry name" value="Photosystem II reaction center protein H"/>
    <property type="match status" value="1"/>
</dbReference>
<dbReference type="HAMAP" id="MF_00752">
    <property type="entry name" value="PSII_PsbH"/>
    <property type="match status" value="1"/>
</dbReference>
<dbReference type="InterPro" id="IPR001056">
    <property type="entry name" value="PSII_PsbH"/>
</dbReference>
<dbReference type="InterPro" id="IPR036863">
    <property type="entry name" value="PSII_PsbH_sf"/>
</dbReference>
<dbReference type="NCBIfam" id="NF002728">
    <property type="entry name" value="PRK02624.1"/>
    <property type="match status" value="1"/>
</dbReference>
<dbReference type="PANTHER" id="PTHR34469">
    <property type="entry name" value="PHOTOSYSTEM II REACTION CENTER PROTEIN H"/>
    <property type="match status" value="1"/>
</dbReference>
<dbReference type="PANTHER" id="PTHR34469:SF4">
    <property type="entry name" value="PHOTOSYSTEM II REACTION CENTER PROTEIN H"/>
    <property type="match status" value="1"/>
</dbReference>
<dbReference type="Pfam" id="PF00737">
    <property type="entry name" value="PsbH"/>
    <property type="match status" value="1"/>
</dbReference>
<dbReference type="SUPFAM" id="SSF161025">
    <property type="entry name" value="Photosystem II 10 kDa phosphoprotein PsbH"/>
    <property type="match status" value="1"/>
</dbReference>
<geneLocation type="chloroplast"/>
<organism>
    <name type="scientific">Sorghum bicolor</name>
    <name type="common">Sorghum</name>
    <name type="synonym">Sorghum vulgare</name>
    <dbReference type="NCBI Taxonomy" id="4558"/>
    <lineage>
        <taxon>Eukaryota</taxon>
        <taxon>Viridiplantae</taxon>
        <taxon>Streptophyta</taxon>
        <taxon>Embryophyta</taxon>
        <taxon>Tracheophyta</taxon>
        <taxon>Spermatophyta</taxon>
        <taxon>Magnoliopsida</taxon>
        <taxon>Liliopsida</taxon>
        <taxon>Poales</taxon>
        <taxon>Poaceae</taxon>
        <taxon>PACMAD clade</taxon>
        <taxon>Panicoideae</taxon>
        <taxon>Andropogonodae</taxon>
        <taxon>Andropogoneae</taxon>
        <taxon>Sorghinae</taxon>
        <taxon>Sorghum</taxon>
    </lineage>
</organism>
<comment type="function">
    <text evidence="2">One of the components of the core complex of photosystem II (PSII), required for its stability and/or assembly. PSII is a light-driven water:plastoquinone oxidoreductase that uses light energy to abstract electrons from H(2)O, generating O(2) and a proton gradient subsequently used for ATP formation. It consists of a core antenna complex that captures photons, and an electron transfer chain that converts photonic excitation into a charge separation.</text>
</comment>
<comment type="subunit">
    <text evidence="2">PSII is composed of 1 copy each of membrane proteins PsbA, PsbB, PsbC, PsbD, PsbE, PsbF, PsbH, PsbI, PsbJ, PsbK, PsbL, PsbM, PsbT, PsbX, PsbY, PsbZ, Psb30/Ycf12, at least 3 peripheral proteins of the oxygen-evolving complex and a large number of cofactors. It forms dimeric complexes.</text>
</comment>
<comment type="subcellular location">
    <subcellularLocation>
        <location evidence="2">Plastid</location>
        <location evidence="2">Chloroplast thylakoid membrane</location>
        <topology evidence="2">Single-pass membrane protein</topology>
    </subcellularLocation>
</comment>
<comment type="PTM">
    <text evidence="2">Phosphorylation is a light-dependent reaction catalyzed by a membrane-bound kinase; phosphorylation occurs on Thr residue(s) in the N-terminus of the protein.</text>
</comment>
<comment type="similarity">
    <text evidence="2">Belongs to the PsbH family.</text>
</comment>
<sequence>MATQTVEDSSRPKPKRTGAGSLLKPLNSEYGKVAPGWGTTPFMGVAMALFAIFLSIILEIYNSSVLLDGILTN</sequence>
<protein>
    <recommendedName>
        <fullName evidence="2">Photosystem II reaction center protein H</fullName>
        <shortName evidence="2">PSII-H</shortName>
    </recommendedName>
    <alternativeName>
        <fullName evidence="2">Photosystem II 10 kDa phosphoprotein</fullName>
    </alternativeName>
</protein>
<proteinExistence type="inferred from homology"/>
<evidence type="ECO:0000250" key="1">
    <source>
        <dbReference type="UniProtKB" id="P56780"/>
    </source>
</evidence>
<evidence type="ECO:0000255" key="2">
    <source>
        <dbReference type="HAMAP-Rule" id="MF_00752"/>
    </source>
</evidence>
<evidence type="ECO:0000256" key="3">
    <source>
        <dbReference type="SAM" id="MobiDB-lite"/>
    </source>
</evidence>
<reference key="1">
    <citation type="journal article" date="2007" name="Theor. Appl. Genet.">
        <title>Complete chloroplast genome sequences of Hordeum vulgare, Sorghum bicolor and Agrostis stolonifera, and comparative analyses with other grass genomes.</title>
        <authorList>
            <person name="Saski C."/>
            <person name="Lee S.-B."/>
            <person name="Fjellheim S."/>
            <person name="Guda C."/>
            <person name="Jansen R.K."/>
            <person name="Luo H."/>
            <person name="Tomkins J."/>
            <person name="Rognli O.A."/>
            <person name="Daniell H."/>
            <person name="Clarke J.L."/>
        </authorList>
    </citation>
    <scope>NUCLEOTIDE SEQUENCE [LARGE SCALE GENOMIC DNA]</scope>
    <source>
        <strain>cv. BTx623</strain>
    </source>
</reference>
<name>PSBH_SORBI</name>
<feature type="initiator methionine" description="Removed" evidence="1">
    <location>
        <position position="1"/>
    </location>
</feature>
<feature type="chain" id="PRO_0000275775" description="Photosystem II reaction center protein H">
    <location>
        <begin position="2"/>
        <end position="73"/>
    </location>
</feature>
<feature type="transmembrane region" description="Helical" evidence="2">
    <location>
        <begin position="41"/>
        <end position="61"/>
    </location>
</feature>
<feature type="region of interest" description="Disordered" evidence="3">
    <location>
        <begin position="1"/>
        <end position="23"/>
    </location>
</feature>
<feature type="modified residue" description="Phosphothreonine" evidence="2">
    <location>
        <position position="3"/>
    </location>
</feature>
<feature type="modified residue" description="Phosphothreonine" evidence="2">
    <location>
        <position position="5"/>
    </location>
</feature>
<accession>A1E9V3</accession>
<keyword id="KW-0150">Chloroplast</keyword>
<keyword id="KW-0472">Membrane</keyword>
<keyword id="KW-0597">Phosphoprotein</keyword>
<keyword id="KW-0602">Photosynthesis</keyword>
<keyword id="KW-0604">Photosystem II</keyword>
<keyword id="KW-0934">Plastid</keyword>
<keyword id="KW-1185">Reference proteome</keyword>
<keyword id="KW-0793">Thylakoid</keyword>
<keyword id="KW-0812">Transmembrane</keyword>
<keyword id="KW-1133">Transmembrane helix</keyword>